<organism>
    <name type="scientific">Gorilla gorilla gorilla</name>
    <name type="common">Western lowland gorilla</name>
    <dbReference type="NCBI Taxonomy" id="9595"/>
    <lineage>
        <taxon>Eukaryota</taxon>
        <taxon>Metazoa</taxon>
        <taxon>Chordata</taxon>
        <taxon>Craniata</taxon>
        <taxon>Vertebrata</taxon>
        <taxon>Euteleostomi</taxon>
        <taxon>Mammalia</taxon>
        <taxon>Eutheria</taxon>
        <taxon>Euarchontoglires</taxon>
        <taxon>Primates</taxon>
        <taxon>Haplorrhini</taxon>
        <taxon>Catarrhini</taxon>
        <taxon>Hominidae</taxon>
        <taxon>Gorilla</taxon>
    </lineage>
</organism>
<keyword id="KW-1015">Disulfide bond</keyword>
<keyword id="KW-0325">Glycoprotein</keyword>
<keyword id="KW-0391">Immunity</keyword>
<keyword id="KW-0472">Membrane</keyword>
<keyword id="KW-0490">MHC I</keyword>
<keyword id="KW-1185">Reference proteome</keyword>
<keyword id="KW-0732">Signal</keyword>
<keyword id="KW-0812">Transmembrane</keyword>
<keyword id="KW-1133">Transmembrane helix</keyword>
<comment type="function">
    <text>Involved in the presentation of foreign antigens to the immune system.</text>
</comment>
<comment type="subunit">
    <text>Heterodimer of an alpha chain and a beta chain (beta-2-microglobulin).</text>
</comment>
<comment type="subcellular location">
    <subcellularLocation>
        <location>Membrane</location>
        <topology>Single-pass type I membrane protein</topology>
    </subcellularLocation>
</comment>
<comment type="similarity">
    <text evidence="5">Belongs to the MHC class I family.</text>
</comment>
<feature type="signal peptide" evidence="1">
    <location>
        <begin position="1"/>
        <end position="24"/>
    </location>
</feature>
<feature type="chain" id="PRO_0000018904" description="Class I histocompatibility antigen, Gogo-B*0201 alpha chain">
    <location>
        <begin position="25"/>
        <end position="363"/>
    </location>
</feature>
<feature type="topological domain" description="Extracellular" evidence="2">
    <location>
        <begin position="25"/>
        <end position="308"/>
    </location>
</feature>
<feature type="transmembrane region" description="Helical" evidence="2">
    <location>
        <begin position="309"/>
        <end position="333"/>
    </location>
</feature>
<feature type="topological domain" description="Cytoplasmic" evidence="2">
    <location>
        <begin position="334"/>
        <end position="363"/>
    </location>
</feature>
<feature type="domain" description="Ig-like C1-type">
    <location>
        <begin position="209"/>
        <end position="297"/>
    </location>
</feature>
<feature type="region of interest" description="Alpha-1">
    <location>
        <begin position="25"/>
        <end position="114"/>
    </location>
</feature>
<feature type="region of interest" description="Alpha-2">
    <location>
        <begin position="115"/>
        <end position="206"/>
    </location>
</feature>
<feature type="region of interest" description="Alpha-3">
    <location>
        <begin position="207"/>
        <end position="298"/>
    </location>
</feature>
<feature type="region of interest" description="Connecting peptide">
    <location>
        <begin position="299"/>
        <end position="308"/>
    </location>
</feature>
<feature type="region of interest" description="Disordered" evidence="4">
    <location>
        <begin position="336"/>
        <end position="363"/>
    </location>
</feature>
<feature type="compositionally biased region" description="Low complexity" evidence="4">
    <location>
        <begin position="344"/>
        <end position="363"/>
    </location>
</feature>
<feature type="glycosylation site" description="N-linked (GlcNAc...) asparagine" evidence="1">
    <location>
        <position position="110"/>
    </location>
</feature>
<feature type="disulfide bond" evidence="3">
    <location>
        <begin position="125"/>
        <end position="188"/>
    </location>
</feature>
<feature type="disulfide bond" evidence="3">
    <location>
        <begin position="227"/>
        <end position="283"/>
    </location>
</feature>
<protein>
    <recommendedName>
        <fullName>Class I histocompatibility antigen, Gogo-B*0201 alpha chain</fullName>
    </recommendedName>
</protein>
<accession>P30382</accession>
<name>1B04_GORGO</name>
<dbReference type="EMBL" id="X60253">
    <property type="protein sequence ID" value="CAA42805.1"/>
    <property type="molecule type" value="mRNA"/>
</dbReference>
<dbReference type="PIR" id="JH0542">
    <property type="entry name" value="JH0542"/>
</dbReference>
<dbReference type="RefSeq" id="XP_055245952.1">
    <property type="nucleotide sequence ID" value="XM_055389977.1"/>
</dbReference>
<dbReference type="SMR" id="P30382"/>
<dbReference type="GeneID" id="101143844"/>
<dbReference type="InParanoid" id="P30382"/>
<dbReference type="Proteomes" id="UP000001519">
    <property type="component" value="Unplaced"/>
</dbReference>
<dbReference type="GO" id="GO:0031901">
    <property type="term" value="C:early endosome membrane"/>
    <property type="evidence" value="ECO:0007669"/>
    <property type="project" value="UniProtKB-ARBA"/>
</dbReference>
<dbReference type="GO" id="GO:0012507">
    <property type="term" value="C:ER to Golgi transport vesicle membrane"/>
    <property type="evidence" value="ECO:0007669"/>
    <property type="project" value="UniProtKB-ARBA"/>
</dbReference>
<dbReference type="GO" id="GO:0009897">
    <property type="term" value="C:external side of plasma membrane"/>
    <property type="evidence" value="ECO:0000318"/>
    <property type="project" value="GO_Central"/>
</dbReference>
<dbReference type="GO" id="GO:0005615">
    <property type="term" value="C:extracellular space"/>
    <property type="evidence" value="ECO:0000318"/>
    <property type="project" value="GO_Central"/>
</dbReference>
<dbReference type="GO" id="GO:0098553">
    <property type="term" value="C:lumenal side of endoplasmic reticulum membrane"/>
    <property type="evidence" value="ECO:0007669"/>
    <property type="project" value="UniProtKB-ARBA"/>
</dbReference>
<dbReference type="GO" id="GO:0042612">
    <property type="term" value="C:MHC class I protein complex"/>
    <property type="evidence" value="ECO:0007669"/>
    <property type="project" value="UniProtKB-KW"/>
</dbReference>
<dbReference type="GO" id="GO:0030670">
    <property type="term" value="C:phagocytic vesicle membrane"/>
    <property type="evidence" value="ECO:0007669"/>
    <property type="project" value="UniProtKB-ARBA"/>
</dbReference>
<dbReference type="GO" id="GO:0055038">
    <property type="term" value="C:recycling endosome membrane"/>
    <property type="evidence" value="ECO:0007669"/>
    <property type="project" value="UniProtKB-ARBA"/>
</dbReference>
<dbReference type="GO" id="GO:0042605">
    <property type="term" value="F:peptide antigen binding"/>
    <property type="evidence" value="ECO:0000318"/>
    <property type="project" value="GO_Central"/>
</dbReference>
<dbReference type="GO" id="GO:0005102">
    <property type="term" value="F:signaling receptor binding"/>
    <property type="evidence" value="ECO:0000318"/>
    <property type="project" value="GO_Central"/>
</dbReference>
<dbReference type="GO" id="GO:0002486">
    <property type="term" value="P:antigen processing and presentation of endogenous peptide antigen via MHC class I via ER pathway, TAP-independent"/>
    <property type="evidence" value="ECO:0000318"/>
    <property type="project" value="GO_Central"/>
</dbReference>
<dbReference type="GO" id="GO:0002476">
    <property type="term" value="P:antigen processing and presentation of endogenous peptide antigen via MHC class Ib"/>
    <property type="evidence" value="ECO:0000318"/>
    <property type="project" value="GO_Central"/>
</dbReference>
<dbReference type="GO" id="GO:0006955">
    <property type="term" value="P:immune response"/>
    <property type="evidence" value="ECO:0000318"/>
    <property type="project" value="GO_Central"/>
</dbReference>
<dbReference type="GO" id="GO:0001916">
    <property type="term" value="P:positive regulation of T cell mediated cytotoxicity"/>
    <property type="evidence" value="ECO:0000318"/>
    <property type="project" value="GO_Central"/>
</dbReference>
<dbReference type="CDD" id="cd21026">
    <property type="entry name" value="IgC1_MHC_Ia_HLA-B"/>
    <property type="match status" value="1"/>
</dbReference>
<dbReference type="FunFam" id="2.60.40.10:FF:000014">
    <property type="entry name" value="H-2 class I histocompatibility antigen, alpha chain"/>
    <property type="match status" value="1"/>
</dbReference>
<dbReference type="FunFam" id="3.30.500.10:FF:000001">
    <property type="entry name" value="H-2 class I histocompatibility antigen, alpha chain"/>
    <property type="match status" value="1"/>
</dbReference>
<dbReference type="Gene3D" id="2.60.40.10">
    <property type="entry name" value="Immunoglobulins"/>
    <property type="match status" value="1"/>
</dbReference>
<dbReference type="Gene3D" id="3.30.500.10">
    <property type="entry name" value="MHC class I-like antigen recognition-like"/>
    <property type="match status" value="1"/>
</dbReference>
<dbReference type="InterPro" id="IPR007110">
    <property type="entry name" value="Ig-like_dom"/>
</dbReference>
<dbReference type="InterPro" id="IPR036179">
    <property type="entry name" value="Ig-like_dom_sf"/>
</dbReference>
<dbReference type="InterPro" id="IPR013783">
    <property type="entry name" value="Ig-like_fold"/>
</dbReference>
<dbReference type="InterPro" id="IPR003006">
    <property type="entry name" value="Ig/MHC_CS"/>
</dbReference>
<dbReference type="InterPro" id="IPR003597">
    <property type="entry name" value="Ig_C1-set"/>
</dbReference>
<dbReference type="InterPro" id="IPR050208">
    <property type="entry name" value="MHC_class-I_related"/>
</dbReference>
<dbReference type="InterPro" id="IPR011161">
    <property type="entry name" value="MHC_I-like_Ag-recog"/>
</dbReference>
<dbReference type="InterPro" id="IPR037055">
    <property type="entry name" value="MHC_I-like_Ag-recog_sf"/>
</dbReference>
<dbReference type="InterPro" id="IPR011162">
    <property type="entry name" value="MHC_I/II-like_Ag-recog"/>
</dbReference>
<dbReference type="InterPro" id="IPR001039">
    <property type="entry name" value="MHC_I_a_a1/a2"/>
</dbReference>
<dbReference type="InterPro" id="IPR010579">
    <property type="entry name" value="MHC_I_a_C"/>
</dbReference>
<dbReference type="PANTHER" id="PTHR16675:SF270">
    <property type="entry name" value="HLA CLASS I HISTOCOMPATIBILITY ANTIGEN, B ALPHA CHAIN"/>
    <property type="match status" value="1"/>
</dbReference>
<dbReference type="PANTHER" id="PTHR16675">
    <property type="entry name" value="MHC CLASS I-RELATED"/>
    <property type="match status" value="1"/>
</dbReference>
<dbReference type="Pfam" id="PF07654">
    <property type="entry name" value="C1-set"/>
    <property type="match status" value="1"/>
</dbReference>
<dbReference type="Pfam" id="PF00129">
    <property type="entry name" value="MHC_I"/>
    <property type="match status" value="1"/>
</dbReference>
<dbReference type="Pfam" id="PF06623">
    <property type="entry name" value="MHC_I_C"/>
    <property type="match status" value="1"/>
</dbReference>
<dbReference type="PRINTS" id="PR01638">
    <property type="entry name" value="MHCCLASSI"/>
</dbReference>
<dbReference type="SMART" id="SM00407">
    <property type="entry name" value="IGc1"/>
    <property type="match status" value="1"/>
</dbReference>
<dbReference type="SUPFAM" id="SSF48726">
    <property type="entry name" value="Immunoglobulin"/>
    <property type="match status" value="1"/>
</dbReference>
<dbReference type="SUPFAM" id="SSF54452">
    <property type="entry name" value="MHC antigen-recognition domain"/>
    <property type="match status" value="1"/>
</dbReference>
<dbReference type="PROSITE" id="PS50835">
    <property type="entry name" value="IG_LIKE"/>
    <property type="match status" value="1"/>
</dbReference>
<dbReference type="PROSITE" id="PS00290">
    <property type="entry name" value="IG_MHC"/>
    <property type="match status" value="1"/>
</dbReference>
<sequence>MQVTAPRTLLLLLSAALALTETWAGSHSMRYFHTAMSRPGRGEPRFITVGYVDDTQFVWFDSDAASPRKEPRTPWIEQEGPEYWDRETQISKTNTQTYRVGLGTLRGYYNQSEDGSHTIQRMYGCDMGPDGRLLRGYSQLAYDGKDYLALNEDLSSWTAADTAAQITQRKWEAARAAEQERAYLEGLCVEWLRRYLENGKETLQRADPPKTHVTHHPISDHEATLRCWALGFYPAEITLTWQRDGEDQTQDTELVETRPAGDRTFQKWAAVVVPSGEEQRYTCRVQHEGLPEPLTLRWEPSSQSTIPIVGIVAGLAVLVVTVAVVAVVAAVMCRRKSSGGKGGSYSQAASSDSAQGSDVSLTA</sequence>
<evidence type="ECO:0000250" key="1"/>
<evidence type="ECO:0000255" key="2"/>
<evidence type="ECO:0000255" key="3">
    <source>
        <dbReference type="PROSITE-ProRule" id="PRU00114"/>
    </source>
</evidence>
<evidence type="ECO:0000256" key="4">
    <source>
        <dbReference type="SAM" id="MobiDB-lite"/>
    </source>
</evidence>
<evidence type="ECO:0000305" key="5"/>
<reference key="1">
    <citation type="journal article" date="1991" name="J. Exp. Med.">
        <title>Gorilla class I major histocompatibility complex alleles: comparison to human and chimpanzee class I.</title>
        <authorList>
            <person name="Lawlor D.A."/>
            <person name="Warren E."/>
            <person name="Taylor P."/>
            <person name="Parham P."/>
        </authorList>
    </citation>
    <scope>NUCLEOTIDE SEQUENCE [MRNA]</scope>
</reference>
<proteinExistence type="evidence at transcript level"/>